<protein>
    <recommendedName>
        <fullName evidence="6">Sodium- and chloride-dependent GABA transporter 2</fullName>
        <shortName evidence="6">GAT-2</shortName>
    </recommendedName>
    <alternativeName>
        <fullName evidence="7">Sodium- and chloride-dependent GABA transporter 3</fullName>
        <shortName evidence="7">GAT-3</shortName>
    </alternativeName>
    <alternativeName>
        <fullName>Solute carrier family 6 member 13</fullName>
    </alternativeName>
</protein>
<proteinExistence type="evidence at protein level"/>
<reference key="1">
    <citation type="journal article" date="1993" name="J. Biol. Chem.">
        <title>Molecular characterization of four pharmacologically distinct gamma-aminobutyric acid transporters in mouse brain.</title>
        <authorList>
            <person name="Liu Q.-R."/>
            <person name="Lopez-Coecuera B."/>
            <person name="Mandiyan S."/>
            <person name="Nelson H."/>
            <person name="Nelson N."/>
        </authorList>
    </citation>
    <scope>NUCLEOTIDE SEQUENCE [MRNA]</scope>
    <scope>FUNCTION</scope>
    <scope>TRANSPORTER ACTIVITY</scope>
    <scope>BIOPHYSICOCHEMICAL PROPERTIES</scope>
    <scope>ACTIVITY REGULATION</scope>
    <scope>TISSUE SPECIFICITY</scope>
    <scope>DEVELOPMENTAL STAGE</scope>
    <source>
        <tissue>Brain</tissue>
    </source>
</reference>
<reference key="2">
    <citation type="journal article" date="2004" name="Genome Res.">
        <title>The status, quality, and expansion of the NIH full-length cDNA project: the Mammalian Gene Collection (MGC).</title>
        <authorList>
            <consortium name="The MGC Project Team"/>
        </authorList>
    </citation>
    <scope>NUCLEOTIDE SEQUENCE [LARGE SCALE MRNA]</scope>
    <source>
        <strain>FVB/N</strain>
        <tissue>Kidney</tissue>
        <tissue>Liver</tissue>
    </source>
</reference>
<reference key="3">
    <citation type="journal article" date="2007" name="Proc. Natl. Acad. Sci. U.S.A.">
        <title>Large-scale phosphorylation analysis of mouse liver.</title>
        <authorList>
            <person name="Villen J."/>
            <person name="Beausoleil S.A."/>
            <person name="Gerber S.A."/>
            <person name="Gygi S.P."/>
        </authorList>
    </citation>
    <scope>PHOSPHORYLATION [LARGE SCALE ANALYSIS] AT THR-587</scope>
    <scope>IDENTIFICATION BY MASS SPECTROMETRY [LARGE SCALE ANALYSIS]</scope>
    <source>
        <tissue>Liver</tissue>
    </source>
</reference>
<reference key="4">
    <citation type="journal article" date="2010" name="Cell">
        <title>A tissue-specific atlas of mouse protein phosphorylation and expression.</title>
        <authorList>
            <person name="Huttlin E.L."/>
            <person name="Jedrychowski M.P."/>
            <person name="Elias J.E."/>
            <person name="Goswami T."/>
            <person name="Rad R."/>
            <person name="Beausoleil S.A."/>
            <person name="Villen J."/>
            <person name="Haas W."/>
            <person name="Sowa M.E."/>
            <person name="Gygi S.P."/>
        </authorList>
    </citation>
    <scope>PHOSPHORYLATION [LARGE SCALE ANALYSIS] AT THR-587 AND SER-591</scope>
    <scope>IDENTIFICATION BY MASS SPECTROMETRY [LARGE SCALE ANALYSIS]</scope>
    <source>
        <tissue>Kidney</tissue>
        <tissue>Liver</tissue>
    </source>
</reference>
<reference key="5">
    <citation type="journal article" date="2012" name="J. Biol. Chem.">
        <title>Deletion of the gamma-aminobutyric acid transporter 2 (GAT2 and SLC6A13) gene in mice leads to changes in liver and brain taurine contents.</title>
        <authorList>
            <person name="Zhou Y."/>
            <person name="Holmseth S."/>
            <person name="Guo C."/>
            <person name="Hassel B."/>
            <person name="Hofner G."/>
            <person name="Huitfeldt H.S."/>
            <person name="Wanner K.T."/>
            <person name="Danbolt N.C."/>
        </authorList>
    </citation>
    <scope>FUNCTION</scope>
    <scope>SUBCELLULAR LOCATION</scope>
    <scope>TISSUE SPECIFICITY</scope>
    <scope>DISRUPTION PHENOTYPE</scope>
    <scope>TRANSPORTER ACTIVITY</scope>
    <scope>ACTIVITY REGULATION</scope>
    <scope>BIOPHYSICOCHEMICAL PROPERTIES</scope>
</reference>
<reference key="6">
    <citation type="journal article" date="2018" name="Biol. Pharm. Bull.">
        <title>Hypotaurine Is a Substrate of GABA Transporter Family Members GAT2/Slc6a13 and TAUT/Slc6a6.</title>
        <authorList>
            <person name="Nishimura T."/>
            <person name="Higuchi K."/>
            <person name="Yoshida Y."/>
            <person name="Sugita-Fujisawa Y."/>
            <person name="Kojima K."/>
            <person name="Sugimoto M."/>
            <person name="Santo M."/>
            <person name="Tomi M."/>
            <person name="Nakashima E."/>
        </authorList>
    </citation>
    <scope>FUNCTION</scope>
    <scope>TRANSPORTER ACTIVITY</scope>
    <scope>BIOPHYSICOCHEMICAL PROPERTIES</scope>
</reference>
<keyword id="KW-1003">Cell membrane</keyword>
<keyword id="KW-1015">Disulfide bond</keyword>
<keyword id="KW-0325">Glycoprotein</keyword>
<keyword id="KW-0472">Membrane</keyword>
<keyword id="KW-0532">Neurotransmitter transport</keyword>
<keyword id="KW-0597">Phosphoprotein</keyword>
<keyword id="KW-1185">Reference proteome</keyword>
<keyword id="KW-0769">Symport</keyword>
<keyword id="KW-0812">Transmembrane</keyword>
<keyword id="KW-1133">Transmembrane helix</keyword>
<keyword id="KW-0813">Transport</keyword>
<gene>
    <name type="primary">Slc6a13</name>
    <name type="synonym">Gabt2</name>
    <name type="synonym">Gabt3</name>
    <name evidence="7" type="synonym">Gat-3</name>
    <name evidence="6" type="synonym">Gat2</name>
    <name evidence="7" type="synonym">Gat3</name>
</gene>
<comment type="function">
    <text evidence="3 4 5">Mediates sodium- and chloride-dependent transport of gamma-aminobutyric acid (GABA) (PubMed:22896705, PubMed:30270321, PubMed:8420981). Can also mediate transport of beta-alanine, taurine and hypotaurine and is the major taurine transporter in hepatocytes (PubMed:22896705, PubMed:30270321, PubMed:8420981).</text>
</comment>
<comment type="catalytic activity">
    <reaction evidence="3 4 5">
        <text>4-aminobutanoate(out) + chloride(out) + 2 Na(+)(out) = 4-aminobutanoate(in) + chloride(in) + 2 Na(+)(in)</text>
        <dbReference type="Rhea" id="RHEA:70687"/>
        <dbReference type="ChEBI" id="CHEBI:17996"/>
        <dbReference type="ChEBI" id="CHEBI:29101"/>
        <dbReference type="ChEBI" id="CHEBI:59888"/>
    </reaction>
    <physiologicalReaction direction="left-to-right" evidence="10">
        <dbReference type="Rhea" id="RHEA:70688"/>
    </physiologicalReaction>
</comment>
<comment type="catalytic activity">
    <reaction evidence="3 4 5">
        <text>taurine(out) + chloride(out) + 2 Na(+)(out) = taurine(in) + chloride(in) + 2 Na(+)(in)</text>
        <dbReference type="Rhea" id="RHEA:71223"/>
        <dbReference type="ChEBI" id="CHEBI:17996"/>
        <dbReference type="ChEBI" id="CHEBI:29101"/>
        <dbReference type="ChEBI" id="CHEBI:507393"/>
    </reaction>
    <physiologicalReaction direction="left-to-right" evidence="10">
        <dbReference type="Rhea" id="RHEA:71224"/>
    </physiologicalReaction>
</comment>
<comment type="catalytic activity">
    <reaction evidence="5">
        <text>beta-alanine(out) + chloride(out) + 2 Na(+)(out) = beta-alanine(in) + chloride(in) + 2 Na(+)(in)</text>
        <dbReference type="Rhea" id="RHEA:71247"/>
        <dbReference type="ChEBI" id="CHEBI:17996"/>
        <dbReference type="ChEBI" id="CHEBI:29101"/>
        <dbReference type="ChEBI" id="CHEBI:57966"/>
    </reaction>
    <physiologicalReaction direction="left-to-right" evidence="10">
        <dbReference type="Rhea" id="RHEA:71248"/>
    </physiologicalReaction>
</comment>
<comment type="catalytic activity">
    <reaction evidence="4">
        <text>hypotaurine(out) + chloride(out) + 2 Na(+)(out) = hypotaurine(in) + chloride(in) + 2 Na(+)(in)</text>
        <dbReference type="Rhea" id="RHEA:71243"/>
        <dbReference type="ChEBI" id="CHEBI:17996"/>
        <dbReference type="ChEBI" id="CHEBI:29101"/>
        <dbReference type="ChEBI" id="CHEBI:57853"/>
    </reaction>
    <physiologicalReaction direction="left-to-right" evidence="9">
        <dbReference type="Rhea" id="RHEA:71244"/>
    </physiologicalReaction>
</comment>
<comment type="activity regulation">
    <text evidence="3 5">Gamma-aminobutyric acid (GABA) transport is inhibited by beta-alanine, taurine, hypotaurine, beta-guanidinopropionic acid, 2,3-diaminopropionic acid, guvacine and nipecotic acid (PubMed:22896705, PubMed:8420981). Beta-alanine transport is inhibited by GABA (PubMed:8420981). Taurine transport is inhibited by GABA, beta-alanine, SNAP-5114, nigericin, nipecotic acid and ouabain (PubMed:22896705).</text>
</comment>
<comment type="biophysicochemical properties">
    <kinetics>
        <KM evidence="5">18 uM for GABA</KM>
        <KM evidence="5">28 uM for beta-alanine</KM>
        <KM evidence="5">540 uM for taurine</KM>
        <KM evidence="3">210 uM for taurine</KM>
        <KM evidence="4">10.6 uM for hypotaurine</KM>
    </kinetics>
</comment>
<comment type="subcellular location">
    <subcellularLocation>
        <location evidence="3">Cell membrane</location>
        <topology evidence="2">Multi-pass membrane protein</topology>
    </subcellularLocation>
    <subcellularLocation>
        <location evidence="3">Basolateral cell membrane</location>
        <topology evidence="2">Multi-pass membrane protein</topology>
    </subcellularLocation>
    <text>In the kidney, detected at the basolateral membranes of parts of proximal tubules.</text>
</comment>
<comment type="tissue specificity">
    <text evidence="3 5">Expressed at high levels in liver, followed by kidney and leptomeninges, and very low levels in the cerebellum (at protein level). In the brain, detected in some blood vessels (at protein level). In the kidney, expressed in the cortex, including parts of the proximal tubules, but not in the medulla (at protein level). In the liver, highest expression in periportal hepatocytes, with highest density at the vascular side (at protein level). Also detected at low levels in other organs, including skeletal muscle.</text>
</comment>
<comment type="developmental stage">
    <text evidence="5">Abundant in neonatal brain, but not in adult brain.</text>
</comment>
<comment type="disruption phenotype">
    <text evidence="3">Mutant animals are born at the expected Mendelian ratio. They appear normal, fertile, with a normal life span. Tissue taurine levels are altered, with 50% decrease in the liver and 20% increase in the brain.</text>
</comment>
<comment type="similarity">
    <text evidence="8">Belongs to the sodium:neurotransmitter symporter (SNF) (TC 2.A.22) family. SLC6A13 subfamily.</text>
</comment>
<feature type="chain" id="PRO_0000214793" description="Sodium- and chloride-dependent GABA transporter 2">
    <location>
        <begin position="1"/>
        <end position="602"/>
    </location>
</feature>
<feature type="topological domain" description="Cytoplasmic" evidence="2">
    <location>
        <begin position="1"/>
        <end position="40"/>
    </location>
</feature>
<feature type="transmembrane region" description="Helical; Name=1" evidence="2">
    <location>
        <begin position="41"/>
        <end position="61"/>
    </location>
</feature>
<feature type="transmembrane region" description="Helical; Name=2" evidence="2">
    <location>
        <begin position="68"/>
        <end position="88"/>
    </location>
</feature>
<feature type="transmembrane region" description="Helical; Name=3" evidence="2">
    <location>
        <begin position="121"/>
        <end position="141"/>
    </location>
</feature>
<feature type="topological domain" description="Extracellular" evidence="2">
    <location>
        <begin position="142"/>
        <end position="206"/>
    </location>
</feature>
<feature type="transmembrane region" description="Helical; Name=4" evidence="2">
    <location>
        <begin position="207"/>
        <end position="227"/>
    </location>
</feature>
<feature type="transmembrane region" description="Helical; Name=5" evidence="2">
    <location>
        <begin position="233"/>
        <end position="253"/>
    </location>
</feature>
<feature type="transmembrane region" description="Helical; Name=6" evidence="2">
    <location>
        <begin position="282"/>
        <end position="302"/>
    </location>
</feature>
<feature type="transmembrane region" description="Helical; Name=7" evidence="2">
    <location>
        <begin position="319"/>
        <end position="339"/>
    </location>
</feature>
<feature type="transmembrane region" description="Helical; Name=8" evidence="2">
    <location>
        <begin position="366"/>
        <end position="386"/>
    </location>
</feature>
<feature type="transmembrane region" description="Helical; Name=9" evidence="2">
    <location>
        <begin position="418"/>
        <end position="438"/>
    </location>
</feature>
<feature type="transmembrane region" description="Helical; Name=10" evidence="2">
    <location>
        <begin position="453"/>
        <end position="473"/>
    </location>
</feature>
<feature type="transmembrane region" description="Helical; Name=11" evidence="2">
    <location>
        <begin position="490"/>
        <end position="510"/>
    </location>
</feature>
<feature type="transmembrane region" description="Helical; Name=12" evidence="2">
    <location>
        <begin position="528"/>
        <end position="548"/>
    </location>
</feature>
<feature type="topological domain" description="Cytoplasmic" evidence="2">
    <location>
        <begin position="549"/>
        <end position="602"/>
    </location>
</feature>
<feature type="modified residue" description="Phosphothreonine" evidence="11 12">
    <location>
        <position position="587"/>
    </location>
</feature>
<feature type="modified residue" description="Phosphoserine" evidence="12">
    <location>
        <position position="591"/>
    </location>
</feature>
<feature type="glycosylation site" description="N-linked (GlcNAc...) asparagine" evidence="2">
    <location>
        <position position="169"/>
    </location>
</feature>
<feature type="glycosylation site" description="N-linked (GlcNAc...) asparagine" evidence="2">
    <location>
        <position position="173"/>
    </location>
</feature>
<feature type="glycosylation site" description="N-linked (GlcNAc...) asparagine" evidence="2">
    <location>
        <position position="178"/>
    </location>
</feature>
<feature type="glycosylation site" description="N-linked (GlcNAc...) asparagine" evidence="2">
    <location>
        <position position="269"/>
    </location>
</feature>
<feature type="disulfide bond" evidence="1">
    <location>
        <begin position="153"/>
        <end position="162"/>
    </location>
</feature>
<accession>P31649</accession>
<dbReference type="EMBL" id="L04663">
    <property type="status" value="NOT_ANNOTATED_CDS"/>
    <property type="molecule type" value="mRNA"/>
</dbReference>
<dbReference type="EMBL" id="BC023117">
    <property type="protein sequence ID" value="AAH23117.1"/>
    <property type="molecule type" value="mRNA"/>
</dbReference>
<dbReference type="EMBL" id="BC029637">
    <property type="protein sequence ID" value="AAH29637.1"/>
    <property type="molecule type" value="mRNA"/>
</dbReference>
<dbReference type="CCDS" id="CCDS20490.1"/>
<dbReference type="PIR" id="A44409">
    <property type="entry name" value="A44409"/>
</dbReference>
<dbReference type="RefSeq" id="NP_001366036.1">
    <property type="nucleotide sequence ID" value="NM_001379107.1"/>
</dbReference>
<dbReference type="RefSeq" id="NP_653095.1">
    <property type="nucleotide sequence ID" value="NM_144512.3"/>
</dbReference>
<dbReference type="SMR" id="P31649"/>
<dbReference type="FunCoup" id="P31649">
    <property type="interactions" value="135"/>
</dbReference>
<dbReference type="STRING" id="10090.ENSMUSP00000066779"/>
<dbReference type="BindingDB" id="P31649"/>
<dbReference type="ChEMBL" id="CHEMBL5205"/>
<dbReference type="DrugCentral" id="P31649"/>
<dbReference type="TCDB" id="2.A.22.3.8">
    <property type="family name" value="the neurotransmitter:sodium symporter (nss) family"/>
</dbReference>
<dbReference type="GlyCosmos" id="P31649">
    <property type="glycosylation" value="4 sites, No reported glycans"/>
</dbReference>
<dbReference type="GlyGen" id="P31649">
    <property type="glycosylation" value="4 sites"/>
</dbReference>
<dbReference type="iPTMnet" id="P31649"/>
<dbReference type="PhosphoSitePlus" id="P31649"/>
<dbReference type="SwissPalm" id="P31649"/>
<dbReference type="jPOST" id="P31649"/>
<dbReference type="PaxDb" id="10090-ENSMUSP00000066779"/>
<dbReference type="PeptideAtlas" id="P31649"/>
<dbReference type="ProteomicsDB" id="256908"/>
<dbReference type="Antibodypedia" id="62641">
    <property type="antibodies" value="82 antibodies from 18 providers"/>
</dbReference>
<dbReference type="DNASU" id="14412"/>
<dbReference type="Ensembl" id="ENSMUST00000064580.14">
    <property type="protein sequence ID" value="ENSMUSP00000066779.8"/>
    <property type="gene ID" value="ENSMUSG00000030108.15"/>
</dbReference>
<dbReference type="GeneID" id="14412"/>
<dbReference type="KEGG" id="mmu:14412"/>
<dbReference type="UCSC" id="uc009doi.1">
    <property type="organism name" value="mouse"/>
</dbReference>
<dbReference type="AGR" id="MGI:95629"/>
<dbReference type="CTD" id="6540"/>
<dbReference type="MGI" id="MGI:95629">
    <property type="gene designation" value="Slc6a13"/>
</dbReference>
<dbReference type="VEuPathDB" id="HostDB:ENSMUSG00000030108"/>
<dbReference type="eggNOG" id="KOG3660">
    <property type="taxonomic scope" value="Eukaryota"/>
</dbReference>
<dbReference type="GeneTree" id="ENSGT00940000157478"/>
<dbReference type="HOGENOM" id="CLU_006855_9_5_1"/>
<dbReference type="InParanoid" id="P31649"/>
<dbReference type="OMA" id="FTPAVCM"/>
<dbReference type="OrthoDB" id="6581954at2759"/>
<dbReference type="PhylomeDB" id="P31649"/>
<dbReference type="TreeFam" id="TF343812"/>
<dbReference type="Reactome" id="R-MMU-442660">
    <property type="pathway name" value="Na+/Cl- dependent neurotransmitter transporters"/>
</dbReference>
<dbReference type="Reactome" id="R-MMU-888593">
    <property type="pathway name" value="Reuptake of GABA"/>
</dbReference>
<dbReference type="BioGRID-ORCS" id="14412">
    <property type="hits" value="0 hits in 76 CRISPR screens"/>
</dbReference>
<dbReference type="PRO" id="PR:P31649"/>
<dbReference type="Proteomes" id="UP000000589">
    <property type="component" value="Chromosome 6"/>
</dbReference>
<dbReference type="RNAct" id="P31649">
    <property type="molecule type" value="protein"/>
</dbReference>
<dbReference type="Bgee" id="ENSMUSG00000030108">
    <property type="expression patterns" value="Expressed in meninx of telencephalon and 125 other cell types or tissues"/>
</dbReference>
<dbReference type="ExpressionAtlas" id="P31649">
    <property type="expression patterns" value="baseline and differential"/>
</dbReference>
<dbReference type="GO" id="GO:0016323">
    <property type="term" value="C:basolateral plasma membrane"/>
    <property type="evidence" value="ECO:0000314"/>
    <property type="project" value="ARUK-UCL"/>
</dbReference>
<dbReference type="GO" id="GO:0005886">
    <property type="term" value="C:plasma membrane"/>
    <property type="evidence" value="ECO:0000314"/>
    <property type="project" value="ARUK-UCL"/>
</dbReference>
<dbReference type="GO" id="GO:0016597">
    <property type="term" value="F:amino acid binding"/>
    <property type="evidence" value="ECO:0007669"/>
    <property type="project" value="Ensembl"/>
</dbReference>
<dbReference type="GO" id="GO:0005283">
    <property type="term" value="F:amino acid:sodium symporter activity"/>
    <property type="evidence" value="ECO:0000314"/>
    <property type="project" value="UniProtKB"/>
</dbReference>
<dbReference type="GO" id="GO:0005308">
    <property type="term" value="F:creatine transmembrane transporter activity"/>
    <property type="evidence" value="ECO:0007669"/>
    <property type="project" value="Ensembl"/>
</dbReference>
<dbReference type="GO" id="GO:0005332">
    <property type="term" value="F:gamma-aminobutyric acid:sodium:chloride symporter activity"/>
    <property type="evidence" value="ECO:0000314"/>
    <property type="project" value="UniProtKB"/>
</dbReference>
<dbReference type="GO" id="GO:0005369">
    <property type="term" value="F:taurine:sodium symporter activity"/>
    <property type="evidence" value="ECO:0000314"/>
    <property type="project" value="UniProtKB"/>
</dbReference>
<dbReference type="GO" id="GO:0089718">
    <property type="term" value="P:amino acid import across plasma membrane"/>
    <property type="evidence" value="ECO:0007669"/>
    <property type="project" value="Ensembl"/>
</dbReference>
<dbReference type="GO" id="GO:0051939">
    <property type="term" value="P:gamma-aminobutyric acid import"/>
    <property type="evidence" value="ECO:0007669"/>
    <property type="project" value="Ensembl"/>
</dbReference>
<dbReference type="GO" id="GO:0006836">
    <property type="term" value="P:neurotransmitter transport"/>
    <property type="evidence" value="ECO:0007669"/>
    <property type="project" value="UniProtKB-KW"/>
</dbReference>
<dbReference type="GO" id="GO:0015734">
    <property type="term" value="P:taurine transmembrane transport"/>
    <property type="evidence" value="ECO:0000315"/>
    <property type="project" value="ARUK-UCL"/>
</dbReference>
<dbReference type="InterPro" id="IPR000175">
    <property type="entry name" value="Na/ntran_symport"/>
</dbReference>
<dbReference type="InterPro" id="IPR002981">
    <property type="entry name" value="Na/ntran_symport_GABA_GAT2"/>
</dbReference>
<dbReference type="InterPro" id="IPR037272">
    <property type="entry name" value="SNS_sf"/>
</dbReference>
<dbReference type="NCBIfam" id="NF037979">
    <property type="entry name" value="Na_transp"/>
    <property type="match status" value="1"/>
</dbReference>
<dbReference type="PANTHER" id="PTHR11616:SF111">
    <property type="entry name" value="SODIUM- AND CHLORIDE-DEPENDENT GABA TRANSPORTER 2"/>
    <property type="match status" value="1"/>
</dbReference>
<dbReference type="PANTHER" id="PTHR11616">
    <property type="entry name" value="SODIUM/CHLORIDE DEPENDENT TRANSPORTER"/>
    <property type="match status" value="1"/>
</dbReference>
<dbReference type="Pfam" id="PF00209">
    <property type="entry name" value="SNF"/>
    <property type="match status" value="1"/>
</dbReference>
<dbReference type="PRINTS" id="PR01196">
    <property type="entry name" value="GAT2TRNSPORT"/>
</dbReference>
<dbReference type="PRINTS" id="PR00176">
    <property type="entry name" value="NANEUSMPORT"/>
</dbReference>
<dbReference type="SUPFAM" id="SSF161070">
    <property type="entry name" value="SNF-like"/>
    <property type="match status" value="1"/>
</dbReference>
<dbReference type="PROSITE" id="PS00610">
    <property type="entry name" value="NA_NEUROTRAN_SYMP_1"/>
    <property type="match status" value="1"/>
</dbReference>
<dbReference type="PROSITE" id="PS00754">
    <property type="entry name" value="NA_NEUROTRAN_SYMP_2"/>
    <property type="match status" value="1"/>
</dbReference>
<dbReference type="PROSITE" id="PS50267">
    <property type="entry name" value="NA_NEUROTRAN_SYMP_3"/>
    <property type="match status" value="1"/>
</dbReference>
<name>S6A13_MOUSE</name>
<evidence type="ECO:0000250" key="1">
    <source>
        <dbReference type="UniProtKB" id="Q7K4Y6"/>
    </source>
</evidence>
<evidence type="ECO:0000255" key="2"/>
<evidence type="ECO:0000269" key="3">
    <source>
    </source>
</evidence>
<evidence type="ECO:0000269" key="4">
    <source>
    </source>
</evidence>
<evidence type="ECO:0000269" key="5">
    <source>
    </source>
</evidence>
<evidence type="ECO:0000303" key="6">
    <source>
    </source>
</evidence>
<evidence type="ECO:0000303" key="7">
    <source>
    </source>
</evidence>
<evidence type="ECO:0000305" key="8"/>
<evidence type="ECO:0000305" key="9">
    <source>
    </source>
</evidence>
<evidence type="ECO:0000305" key="10">
    <source>
    </source>
</evidence>
<evidence type="ECO:0007744" key="11">
    <source>
    </source>
</evidence>
<evidence type="ECO:0007744" key="12">
    <source>
    </source>
</evidence>
<organism>
    <name type="scientific">Mus musculus</name>
    <name type="common">Mouse</name>
    <dbReference type="NCBI Taxonomy" id="10090"/>
    <lineage>
        <taxon>Eukaryota</taxon>
        <taxon>Metazoa</taxon>
        <taxon>Chordata</taxon>
        <taxon>Craniata</taxon>
        <taxon>Vertebrata</taxon>
        <taxon>Euteleostomi</taxon>
        <taxon>Mammalia</taxon>
        <taxon>Eutheria</taxon>
        <taxon>Euarchontoglires</taxon>
        <taxon>Glires</taxon>
        <taxon>Rodentia</taxon>
        <taxon>Myomorpha</taxon>
        <taxon>Muroidea</taxon>
        <taxon>Muridae</taxon>
        <taxon>Murinae</taxon>
        <taxon>Mus</taxon>
        <taxon>Mus</taxon>
    </lineage>
</organism>
<sequence>MENRASGTTSNGETKPVCPAMEKVEEDGTLEREHWNNKMEFVLSVAGEIIGLGNVWRFPYLCYKNGGGAFFIPYLIFLFTCGIPVFFLETALGQYTNQGGITAWRRICPIFEGIGYASQMIVSLLNVYYIVVLAWALFYLFSSFTTDLPWGSCSHEWNTENCVEFQKANDSMNVTSENATSPVIEFWERRVLKLSDGIQHLGSLRWELVLCLLLAWIICYFCIWKGVKSTGKVVYFTATFPYLMLVVLLIRGVTLPGAAQGIQFYLYPNITRLWDPQVWMDAGTQIFFSFAICLGCLTALGSYNKYHNNCYRDCIALCILNSSTSFMAGFAIFSILGFMSQEQGVPISEVAESGPGLAFIAYPRAVVMLPFSPLWACCFFFMVVLLGLDSQFVCVESLVTALVDMYPRVFRKKNRREVLILIVSVISFFIGLIMLTEGGMYVFQLFDYYAASGMCLLFVAIFESLCVAWVYGAGRFYDNIEDMIGYKPWPLIKYCWLFFTPAVCLATFLFSLIKYTPLTYNKKYTYPWWGDALGWLLALSSMICIPAWSIYKLRTLKGPLRERLRQLVCPAEDLPQKNQPEPTAPATPMTSLLRLTELESNC</sequence>